<reference key="1">
    <citation type="journal article" date="1999" name="Genetics">
        <title>Divergence of the hyperthermophilic archaea Pyrococcus furiosus and P. horikoshii inferred from complete genomic sequences.</title>
        <authorList>
            <person name="Maeder D.L."/>
            <person name="Weiss R.B."/>
            <person name="Dunn D.M."/>
            <person name="Cherry J.L."/>
            <person name="Gonzalez J.M."/>
            <person name="DiRuggiero J."/>
            <person name="Robb F.T."/>
        </authorList>
    </citation>
    <scope>NUCLEOTIDE SEQUENCE [LARGE SCALE GENOMIC DNA]</scope>
    <source>
        <strain>ATCC 43587 / DSM 3638 / JCM 8422 / Vc1</strain>
    </source>
</reference>
<feature type="chain" id="PRO_0000100915" description="Phosphoribosylaminoimidazole-succinocarboxamide synthase">
    <location>
        <begin position="1"/>
        <end position="234"/>
    </location>
</feature>
<sequence length="234" mass="27162">MEIYEGKAKKMIPLDEDKFIMEFKDDATAFDGVKKAKFVGKGWLNAQISAKLFKLLEDHGIKTHFIGVAGGNRLIVERLEMYPIEVVVRNVVAGSLKKRLPLPEGYELPEPIVELYYKSDELHDPMINYYHARILGISEEEIKEMERIALKVNEILKKFFREKGIILVDFKLEFGKNKKGEIVLADEISPDTCRFWDVETKKSLDKDVFRFDKGDLIEAYKELYKRLIGEEPQI</sequence>
<protein>
    <recommendedName>
        <fullName evidence="1">Phosphoribosylaminoimidazole-succinocarboxamide synthase</fullName>
        <ecNumber evidence="1">6.3.2.6</ecNumber>
    </recommendedName>
    <alternativeName>
        <fullName evidence="1">SAICAR synthetase</fullName>
    </alternativeName>
</protein>
<accession>Q8U4D5</accession>
<proteinExistence type="inferred from homology"/>
<dbReference type="EC" id="6.3.2.6" evidence="1"/>
<dbReference type="EMBL" id="AE009950">
    <property type="protein sequence ID" value="AAL80277.1"/>
    <property type="molecule type" value="Genomic_DNA"/>
</dbReference>
<dbReference type="RefSeq" id="WP_011011266.1">
    <property type="nucleotide sequence ID" value="NZ_CP023154.1"/>
</dbReference>
<dbReference type="SMR" id="Q8U4D5"/>
<dbReference type="STRING" id="186497.PF0153"/>
<dbReference type="PaxDb" id="186497-PF0153"/>
<dbReference type="GeneID" id="41711943"/>
<dbReference type="KEGG" id="pfu:PF0153"/>
<dbReference type="PATRIC" id="fig|186497.12.peg.159"/>
<dbReference type="eggNOG" id="arCOG04421">
    <property type="taxonomic scope" value="Archaea"/>
</dbReference>
<dbReference type="HOGENOM" id="CLU_061495_2_0_2"/>
<dbReference type="OrthoDB" id="10775at2157"/>
<dbReference type="PhylomeDB" id="Q8U4D5"/>
<dbReference type="UniPathway" id="UPA00074">
    <property type="reaction ID" value="UER00131"/>
</dbReference>
<dbReference type="Proteomes" id="UP000001013">
    <property type="component" value="Chromosome"/>
</dbReference>
<dbReference type="GO" id="GO:0005524">
    <property type="term" value="F:ATP binding"/>
    <property type="evidence" value="ECO:0007669"/>
    <property type="project" value="UniProtKB-KW"/>
</dbReference>
<dbReference type="GO" id="GO:0004639">
    <property type="term" value="F:phosphoribosylaminoimidazolesuccinocarboxamide synthase activity"/>
    <property type="evidence" value="ECO:0007669"/>
    <property type="project" value="UniProtKB-UniRule"/>
</dbReference>
<dbReference type="GO" id="GO:0006189">
    <property type="term" value="P:'de novo' IMP biosynthetic process"/>
    <property type="evidence" value="ECO:0007669"/>
    <property type="project" value="UniProtKB-UniRule"/>
</dbReference>
<dbReference type="GO" id="GO:0009236">
    <property type="term" value="P:cobalamin biosynthetic process"/>
    <property type="evidence" value="ECO:0007669"/>
    <property type="project" value="InterPro"/>
</dbReference>
<dbReference type="CDD" id="cd01415">
    <property type="entry name" value="SAICAR_synt_PurC"/>
    <property type="match status" value="1"/>
</dbReference>
<dbReference type="FunFam" id="3.30.200.20:FF:000086">
    <property type="entry name" value="Phosphoribosylaminoimidazole-succinocarboxamide synthase"/>
    <property type="match status" value="1"/>
</dbReference>
<dbReference type="FunFam" id="3.30.470.20:FF:000006">
    <property type="entry name" value="Phosphoribosylaminoimidazole-succinocarboxamide synthase"/>
    <property type="match status" value="1"/>
</dbReference>
<dbReference type="Gene3D" id="3.30.470.20">
    <property type="entry name" value="ATP-grasp fold, B domain"/>
    <property type="match status" value="1"/>
</dbReference>
<dbReference type="Gene3D" id="3.30.200.20">
    <property type="entry name" value="Phosphorylase Kinase, domain 1"/>
    <property type="match status" value="1"/>
</dbReference>
<dbReference type="HAMAP" id="MF_00137">
    <property type="entry name" value="SAICAR_synth"/>
    <property type="match status" value="1"/>
</dbReference>
<dbReference type="InterPro" id="IPR028923">
    <property type="entry name" value="SAICAR_synt/ADE2_N"/>
</dbReference>
<dbReference type="InterPro" id="IPR033934">
    <property type="entry name" value="SAICAR_synt_PurC"/>
</dbReference>
<dbReference type="InterPro" id="IPR001636">
    <property type="entry name" value="SAICAR_synth"/>
</dbReference>
<dbReference type="InterPro" id="IPR050089">
    <property type="entry name" value="SAICAR_synthetase"/>
</dbReference>
<dbReference type="InterPro" id="IPR018236">
    <property type="entry name" value="SAICAR_synthetase_CS"/>
</dbReference>
<dbReference type="NCBIfam" id="TIGR00081">
    <property type="entry name" value="purC"/>
    <property type="match status" value="1"/>
</dbReference>
<dbReference type="PANTHER" id="PTHR43599">
    <property type="entry name" value="MULTIFUNCTIONAL PROTEIN ADE2"/>
    <property type="match status" value="1"/>
</dbReference>
<dbReference type="PANTHER" id="PTHR43599:SF3">
    <property type="entry name" value="SI:DKEY-6E2.2"/>
    <property type="match status" value="1"/>
</dbReference>
<dbReference type="Pfam" id="PF01259">
    <property type="entry name" value="SAICAR_synt"/>
    <property type="match status" value="1"/>
</dbReference>
<dbReference type="SUPFAM" id="SSF56104">
    <property type="entry name" value="SAICAR synthase-like"/>
    <property type="match status" value="1"/>
</dbReference>
<dbReference type="PROSITE" id="PS01057">
    <property type="entry name" value="SAICAR_SYNTHETASE_1"/>
    <property type="match status" value="1"/>
</dbReference>
<dbReference type="PROSITE" id="PS01058">
    <property type="entry name" value="SAICAR_SYNTHETASE_2"/>
    <property type="match status" value="1"/>
</dbReference>
<name>PUR7_PYRFU</name>
<evidence type="ECO:0000255" key="1">
    <source>
        <dbReference type="HAMAP-Rule" id="MF_00137"/>
    </source>
</evidence>
<gene>
    <name evidence="1" type="primary">purC</name>
    <name type="ordered locus">PF0153</name>
</gene>
<keyword id="KW-0067">ATP-binding</keyword>
<keyword id="KW-0436">Ligase</keyword>
<keyword id="KW-0547">Nucleotide-binding</keyword>
<keyword id="KW-0658">Purine biosynthesis</keyword>
<keyword id="KW-1185">Reference proteome</keyword>
<comment type="catalytic activity">
    <reaction evidence="1">
        <text>5-amino-1-(5-phospho-D-ribosyl)imidazole-4-carboxylate + L-aspartate + ATP = (2S)-2-[5-amino-1-(5-phospho-beta-D-ribosyl)imidazole-4-carboxamido]succinate + ADP + phosphate + 2 H(+)</text>
        <dbReference type="Rhea" id="RHEA:22628"/>
        <dbReference type="ChEBI" id="CHEBI:15378"/>
        <dbReference type="ChEBI" id="CHEBI:29991"/>
        <dbReference type="ChEBI" id="CHEBI:30616"/>
        <dbReference type="ChEBI" id="CHEBI:43474"/>
        <dbReference type="ChEBI" id="CHEBI:58443"/>
        <dbReference type="ChEBI" id="CHEBI:77657"/>
        <dbReference type="ChEBI" id="CHEBI:456216"/>
        <dbReference type="EC" id="6.3.2.6"/>
    </reaction>
</comment>
<comment type="pathway">
    <text evidence="1">Purine metabolism; IMP biosynthesis via de novo pathway; 5-amino-1-(5-phospho-D-ribosyl)imidazole-4-carboxamide from 5-amino-1-(5-phospho-D-ribosyl)imidazole-4-carboxylate: step 1/2.</text>
</comment>
<comment type="similarity">
    <text evidence="1">Belongs to the SAICAR synthetase family.</text>
</comment>
<organism>
    <name type="scientific">Pyrococcus furiosus (strain ATCC 43587 / DSM 3638 / JCM 8422 / Vc1)</name>
    <dbReference type="NCBI Taxonomy" id="186497"/>
    <lineage>
        <taxon>Archaea</taxon>
        <taxon>Methanobacteriati</taxon>
        <taxon>Methanobacteriota</taxon>
        <taxon>Thermococci</taxon>
        <taxon>Thermococcales</taxon>
        <taxon>Thermococcaceae</taxon>
        <taxon>Pyrococcus</taxon>
    </lineage>
</organism>